<reference key="1">
    <citation type="journal article" date="2005" name="Nucleic Acids Res.">
        <title>Genome dynamics and diversity of Shigella species, the etiologic agents of bacillary dysentery.</title>
        <authorList>
            <person name="Yang F."/>
            <person name="Yang J."/>
            <person name="Zhang X."/>
            <person name="Chen L."/>
            <person name="Jiang Y."/>
            <person name="Yan Y."/>
            <person name="Tang X."/>
            <person name="Wang J."/>
            <person name="Xiong Z."/>
            <person name="Dong J."/>
            <person name="Xue Y."/>
            <person name="Zhu Y."/>
            <person name="Xu X."/>
            <person name="Sun L."/>
            <person name="Chen S."/>
            <person name="Nie H."/>
            <person name="Peng J."/>
            <person name="Xu J."/>
            <person name="Wang Y."/>
            <person name="Yuan Z."/>
            <person name="Wen Y."/>
            <person name="Yao Z."/>
            <person name="Shen Y."/>
            <person name="Qiang B."/>
            <person name="Hou Y."/>
            <person name="Yu J."/>
            <person name="Jin Q."/>
        </authorList>
    </citation>
    <scope>NUCLEOTIDE SEQUENCE [LARGE SCALE GENOMIC DNA]</scope>
    <source>
        <strain>Ss046</strain>
    </source>
</reference>
<evidence type="ECO:0000250" key="1">
    <source>
        <dbReference type="UniProtKB" id="P00550"/>
    </source>
</evidence>
<evidence type="ECO:0000250" key="2">
    <source>
        <dbReference type="UniProtKB" id="P69822"/>
    </source>
</evidence>
<evidence type="ECO:0000255" key="3">
    <source>
        <dbReference type="PROSITE-ProRule" id="PRU00422"/>
    </source>
</evidence>
<evidence type="ECO:0000305" key="4"/>
<proteinExistence type="inferred from homology"/>
<keyword id="KW-0963">Cytoplasm</keyword>
<keyword id="KW-0418">Kinase</keyword>
<keyword id="KW-0597">Phosphoprotein</keyword>
<keyword id="KW-0598">Phosphotransferase system</keyword>
<keyword id="KW-1185">Reference proteome</keyword>
<keyword id="KW-0808">Transferase</keyword>
<keyword id="KW-0813">Transport</keyword>
<feature type="chain" id="PRO_0000230330" description="Ascorbate-specific PTS system EIIB component">
    <location>
        <begin position="1"/>
        <end position="101"/>
    </location>
</feature>
<feature type="domain" description="PTS EIIB type-2" evidence="3">
    <location>
        <begin position="3"/>
        <end position="96"/>
    </location>
</feature>
<feature type="active site" description="Phosphocysteine intermediate" evidence="1 4">
    <location>
        <position position="9"/>
    </location>
</feature>
<feature type="modified residue" description="Phosphocysteine" evidence="1 4">
    <location>
        <position position="9"/>
    </location>
</feature>
<organism>
    <name type="scientific">Shigella sonnei (strain Ss046)</name>
    <dbReference type="NCBI Taxonomy" id="300269"/>
    <lineage>
        <taxon>Bacteria</taxon>
        <taxon>Pseudomonadati</taxon>
        <taxon>Pseudomonadota</taxon>
        <taxon>Gammaproteobacteria</taxon>
        <taxon>Enterobacterales</taxon>
        <taxon>Enterobacteriaceae</taxon>
        <taxon>Shigella</taxon>
    </lineage>
</organism>
<comment type="function">
    <text evidence="2">The phosphoenolpyruvate-dependent sugar phosphotransferase system (sugar PTS), a major carbohydrate active transport system, catalyzes the phosphorylation of incoming sugar substrates concomitantly with their translocation across the cell membrane. The enzyme II UlaABC PTS system is involved in ascorbate transport.</text>
</comment>
<comment type="catalytic activity">
    <reaction evidence="2">
        <text>N(pros)-phospho-L-histidyl-[protein] + L-ascorbate(out) = L-ascorbate 6-phosphate(in) + L-histidyl-[protein]</text>
        <dbReference type="Rhea" id="RHEA:42436"/>
        <dbReference type="Rhea" id="RHEA-COMP:9745"/>
        <dbReference type="Rhea" id="RHEA-COMP:9746"/>
        <dbReference type="ChEBI" id="CHEBI:29979"/>
        <dbReference type="ChEBI" id="CHEBI:38290"/>
        <dbReference type="ChEBI" id="CHEBI:61698"/>
        <dbReference type="ChEBI" id="CHEBI:64837"/>
        <dbReference type="EC" id="2.7.1.194"/>
    </reaction>
</comment>
<comment type="subcellular location">
    <subcellularLocation>
        <location evidence="4">Cytoplasm</location>
    </subcellularLocation>
</comment>
<comment type="induction">
    <text evidence="2">Induced by L-ascorbate. Repressed by UlaR.</text>
</comment>
<comment type="domain">
    <text evidence="3">The PTS EIIB type-2 domain is phosphorylated by phospho-EIIA on a cysteinyl residue. Then, it transfers the phosphoryl group to the sugar substrate concomitantly with the sugar uptake processed by the PTS EIIC type-2 domain.</text>
</comment>
<dbReference type="EC" id="2.7.1.194" evidence="2"/>
<dbReference type="EMBL" id="CP000038">
    <property type="protein sequence ID" value="AAZ90858.1"/>
    <property type="molecule type" value="Genomic_DNA"/>
</dbReference>
<dbReference type="RefSeq" id="WP_005144289.1">
    <property type="nucleotide sequence ID" value="NC_007384.1"/>
</dbReference>
<dbReference type="SMR" id="Q3YUF4"/>
<dbReference type="GeneID" id="93777630"/>
<dbReference type="KEGG" id="ssn:SSON_4376"/>
<dbReference type="HOGENOM" id="CLU_159248_0_0_6"/>
<dbReference type="Proteomes" id="UP000002529">
    <property type="component" value="Chromosome"/>
</dbReference>
<dbReference type="GO" id="GO:0005737">
    <property type="term" value="C:cytoplasm"/>
    <property type="evidence" value="ECO:0007669"/>
    <property type="project" value="UniProtKB-SubCell"/>
</dbReference>
<dbReference type="GO" id="GO:0016301">
    <property type="term" value="F:kinase activity"/>
    <property type="evidence" value="ECO:0007669"/>
    <property type="project" value="UniProtKB-KW"/>
</dbReference>
<dbReference type="GO" id="GO:0008982">
    <property type="term" value="F:protein-N(PI)-phosphohistidine-sugar phosphotransferase activity"/>
    <property type="evidence" value="ECO:0007669"/>
    <property type="project" value="InterPro"/>
</dbReference>
<dbReference type="GO" id="GO:0009401">
    <property type="term" value="P:phosphoenolpyruvate-dependent sugar phosphotransferase system"/>
    <property type="evidence" value="ECO:0007669"/>
    <property type="project" value="UniProtKB-KW"/>
</dbReference>
<dbReference type="CDD" id="cd05563">
    <property type="entry name" value="PTS_IIB_ascorbate"/>
    <property type="match status" value="1"/>
</dbReference>
<dbReference type="FunFam" id="3.40.50.2300:FF:000030">
    <property type="entry name" value="PTS system, ascorbate-specific, IIB component"/>
    <property type="match status" value="1"/>
</dbReference>
<dbReference type="Gene3D" id="3.40.50.2300">
    <property type="match status" value="1"/>
</dbReference>
<dbReference type="InterPro" id="IPR036095">
    <property type="entry name" value="PTS_EIIB-like_sf"/>
</dbReference>
<dbReference type="InterPro" id="IPR013011">
    <property type="entry name" value="PTS_EIIB_2"/>
</dbReference>
<dbReference type="InterPro" id="IPR003501">
    <property type="entry name" value="PTS_EIIB_2/3"/>
</dbReference>
<dbReference type="NCBIfam" id="NF007586">
    <property type="entry name" value="PRK10222.1"/>
    <property type="match status" value="1"/>
</dbReference>
<dbReference type="Pfam" id="PF02302">
    <property type="entry name" value="PTS_IIB"/>
    <property type="match status" value="1"/>
</dbReference>
<dbReference type="SUPFAM" id="SSF52794">
    <property type="entry name" value="PTS system IIB component-like"/>
    <property type="match status" value="1"/>
</dbReference>
<dbReference type="PROSITE" id="PS51099">
    <property type="entry name" value="PTS_EIIB_TYPE_2"/>
    <property type="match status" value="1"/>
</dbReference>
<gene>
    <name type="primary">ulaB</name>
    <name type="ordered locus">SSON_4376</name>
</gene>
<name>ULAB_SHISS</name>
<sequence>MTVRILAVCGNGQGSSMIMRMKVDQFLTQSNIDHTVNSCAVGEYKSELSGADIIIASTHIAGEITVTGNKYVVGVRNMLSPADFGPKLLEVIKAHFPQDVK</sequence>
<protein>
    <recommendedName>
        <fullName evidence="2">Ascorbate-specific PTS system EIIB component</fullName>
        <ecNumber evidence="2">2.7.1.194</ecNumber>
    </recommendedName>
    <alternativeName>
        <fullName evidence="2">Ascorbate-specific phosphotransferase enzyme IIB component</fullName>
    </alternativeName>
</protein>
<accession>Q3YUF4</accession>